<keyword id="KW-0007">Acetylation</keyword>
<keyword id="KW-0903">Direct protein sequencing</keyword>
<keyword id="KW-0378">Hydrolase</keyword>
<keyword id="KW-1185">Reference proteome</keyword>
<feature type="initiator methionine" description="Removed" evidence="1">
    <location>
        <position position="1"/>
    </location>
</feature>
<feature type="chain" id="PRO_0000158538" description="Acylphosphatase-1">
    <location>
        <begin position="2"/>
        <end position="99"/>
    </location>
</feature>
<feature type="domain" description="Acylphosphatase-like" evidence="2">
    <location>
        <begin position="9"/>
        <end position="99"/>
    </location>
</feature>
<feature type="active site" evidence="2">
    <location>
        <position position="24"/>
    </location>
</feature>
<feature type="active site" evidence="2">
    <location>
        <position position="42"/>
    </location>
</feature>
<feature type="modified residue" description="N-acetylalanine" evidence="3">
    <location>
        <position position="2"/>
    </location>
</feature>
<reference key="1">
    <citation type="journal article" date="1987" name="J. Biochem.">
        <title>The primary structure of chicken muscle acylphosphatase isozyme Ch2.</title>
        <authorList>
            <person name="Ohba Y."/>
            <person name="Minowa O."/>
            <person name="Mizuno Y."/>
            <person name="Shiokawa H."/>
        </authorList>
    </citation>
    <scope>PROTEIN SEQUENCE OF 2-99</scope>
    <scope>ACETYLATION AT ALA-2</scope>
    <scope>CATALYTIC ACTIVITY</scope>
    <source>
        <tissue>Muscle</tissue>
    </source>
</reference>
<sequence>MAGSEGLMSVDYEVSGRVQGVFFRKYTQSEAKRLGLVGWVRNTSHGTVQGQAQGPAARVRELQEWLRKIGSPQSRISRAEFTNEKEIAALEHTDFQIRK</sequence>
<gene>
    <name type="primary">ACYP1</name>
</gene>
<comment type="catalytic activity">
    <reaction evidence="5">
        <text>an acyl phosphate + H2O = a carboxylate + phosphate + H(+)</text>
        <dbReference type="Rhea" id="RHEA:14965"/>
        <dbReference type="ChEBI" id="CHEBI:15377"/>
        <dbReference type="ChEBI" id="CHEBI:15378"/>
        <dbReference type="ChEBI" id="CHEBI:29067"/>
        <dbReference type="ChEBI" id="CHEBI:43474"/>
        <dbReference type="ChEBI" id="CHEBI:59918"/>
        <dbReference type="EC" id="3.6.1.7"/>
    </reaction>
</comment>
<comment type="tissue specificity">
    <text>Organ-common type isozyme is found in many different tissues.</text>
</comment>
<comment type="similarity">
    <text evidence="4">Belongs to the acylphosphatase family.</text>
</comment>
<protein>
    <recommendedName>
        <fullName>Acylphosphatase-1</fullName>
        <ecNumber evidence="5">3.6.1.7</ecNumber>
    </recommendedName>
    <alternativeName>
        <fullName>Acylphosphatase isozyme CH2</fullName>
    </alternativeName>
    <alternativeName>
        <fullName>Acylphosphatase, organ-common type isozyme</fullName>
    </alternativeName>
    <alternativeName>
        <fullName>Acylphosphate phosphohydrolase 1</fullName>
    </alternativeName>
</protein>
<name>ACYP1_CHICK</name>
<organism>
    <name type="scientific">Gallus gallus</name>
    <name type="common">Chicken</name>
    <dbReference type="NCBI Taxonomy" id="9031"/>
    <lineage>
        <taxon>Eukaryota</taxon>
        <taxon>Metazoa</taxon>
        <taxon>Chordata</taxon>
        <taxon>Craniata</taxon>
        <taxon>Vertebrata</taxon>
        <taxon>Euteleostomi</taxon>
        <taxon>Archelosauria</taxon>
        <taxon>Archosauria</taxon>
        <taxon>Dinosauria</taxon>
        <taxon>Saurischia</taxon>
        <taxon>Theropoda</taxon>
        <taxon>Coelurosauria</taxon>
        <taxon>Aves</taxon>
        <taxon>Neognathae</taxon>
        <taxon>Galloanserae</taxon>
        <taxon>Galliformes</taxon>
        <taxon>Phasianidae</taxon>
        <taxon>Phasianinae</taxon>
        <taxon>Gallus</taxon>
    </lineage>
</organism>
<dbReference type="EC" id="3.6.1.7" evidence="5"/>
<dbReference type="PIR" id="A41513">
    <property type="entry name" value="QPCH2"/>
</dbReference>
<dbReference type="RefSeq" id="NP_001161477.1">
    <property type="nucleotide sequence ID" value="NM_001168005.3"/>
</dbReference>
<dbReference type="SMR" id="P07032"/>
<dbReference type="FunCoup" id="P07032">
    <property type="interactions" value="755"/>
</dbReference>
<dbReference type="STRING" id="9031.ENSGALP00000036932"/>
<dbReference type="iPTMnet" id="P07032"/>
<dbReference type="PaxDb" id="9031-ENSGALP00000036932"/>
<dbReference type="Ensembl" id="ENSGALT00010014630.1">
    <property type="protein sequence ID" value="ENSGALP00010008621.1"/>
    <property type="gene ID" value="ENSGALG00010006128.1"/>
</dbReference>
<dbReference type="GeneID" id="423361"/>
<dbReference type="KEGG" id="gga:423361"/>
<dbReference type="CTD" id="97"/>
<dbReference type="VEuPathDB" id="HostDB:geneid_423361"/>
<dbReference type="eggNOG" id="KOG3360">
    <property type="taxonomic scope" value="Eukaryota"/>
</dbReference>
<dbReference type="GeneTree" id="ENSGT00390000011103"/>
<dbReference type="HOGENOM" id="CLU_141932_0_1_1"/>
<dbReference type="InParanoid" id="P07032"/>
<dbReference type="OMA" id="WVRNTSH"/>
<dbReference type="OrthoDB" id="7961613at2759"/>
<dbReference type="PhylomeDB" id="P07032"/>
<dbReference type="SABIO-RK" id="P07032"/>
<dbReference type="PRO" id="PR:P07032"/>
<dbReference type="Proteomes" id="UP000000539">
    <property type="component" value="Chromosome 5"/>
</dbReference>
<dbReference type="Bgee" id="ENSGALG00000010307">
    <property type="expression patterns" value="Expressed in spermatid and 14 other cell types or tissues"/>
</dbReference>
<dbReference type="GO" id="GO:0003998">
    <property type="term" value="F:acylphosphatase activity"/>
    <property type="evidence" value="ECO:0000318"/>
    <property type="project" value="GO_Central"/>
</dbReference>
<dbReference type="FunFam" id="3.30.70.100:FF:000011">
    <property type="entry name" value="Acylphosphatase"/>
    <property type="match status" value="1"/>
</dbReference>
<dbReference type="Gene3D" id="3.30.70.100">
    <property type="match status" value="1"/>
</dbReference>
<dbReference type="InterPro" id="IPR020456">
    <property type="entry name" value="Acylphosphatase"/>
</dbReference>
<dbReference type="InterPro" id="IPR001792">
    <property type="entry name" value="Acylphosphatase-like_dom"/>
</dbReference>
<dbReference type="InterPro" id="IPR036046">
    <property type="entry name" value="Acylphosphatase-like_dom_sf"/>
</dbReference>
<dbReference type="InterPro" id="IPR017968">
    <property type="entry name" value="Acylphosphatase_CS"/>
</dbReference>
<dbReference type="PANTHER" id="PTHR10029">
    <property type="entry name" value="ACYLPHOSPHATASE"/>
    <property type="match status" value="1"/>
</dbReference>
<dbReference type="PANTHER" id="PTHR10029:SF21">
    <property type="entry name" value="ACYLPHOSPHATASE-1"/>
    <property type="match status" value="1"/>
</dbReference>
<dbReference type="Pfam" id="PF00708">
    <property type="entry name" value="Acylphosphatase"/>
    <property type="match status" value="1"/>
</dbReference>
<dbReference type="PRINTS" id="PR00112">
    <property type="entry name" value="ACYLPHPHTASE"/>
</dbReference>
<dbReference type="SUPFAM" id="SSF54975">
    <property type="entry name" value="Acylphosphatase/BLUF domain-like"/>
    <property type="match status" value="1"/>
</dbReference>
<dbReference type="PROSITE" id="PS00150">
    <property type="entry name" value="ACYLPHOSPHATASE_1"/>
    <property type="match status" value="1"/>
</dbReference>
<dbReference type="PROSITE" id="PS00151">
    <property type="entry name" value="ACYLPHOSPHATASE_2"/>
    <property type="match status" value="1"/>
</dbReference>
<dbReference type="PROSITE" id="PS51160">
    <property type="entry name" value="ACYLPHOSPHATASE_3"/>
    <property type="match status" value="1"/>
</dbReference>
<accession>P07032</accession>
<evidence type="ECO:0000250" key="1"/>
<evidence type="ECO:0000255" key="2">
    <source>
        <dbReference type="PROSITE-ProRule" id="PRU00520"/>
    </source>
</evidence>
<evidence type="ECO:0000269" key="3">
    <source>
    </source>
</evidence>
<evidence type="ECO:0000305" key="4"/>
<evidence type="ECO:0000305" key="5">
    <source>
    </source>
</evidence>
<proteinExistence type="evidence at protein level"/>